<protein>
    <recommendedName>
        <fullName evidence="1">Trigger factor</fullName>
        <shortName evidence="1">TF</shortName>
        <ecNumber evidence="1">5.2.1.8</ecNumber>
    </recommendedName>
    <alternativeName>
        <fullName evidence="1">PPIase</fullName>
    </alternativeName>
</protein>
<evidence type="ECO:0000255" key="1">
    <source>
        <dbReference type="HAMAP-Rule" id="MF_00303"/>
    </source>
</evidence>
<name>TIG_BACCQ</name>
<accession>B9IZ48</accession>
<keyword id="KW-0131">Cell cycle</keyword>
<keyword id="KW-0132">Cell division</keyword>
<keyword id="KW-0143">Chaperone</keyword>
<keyword id="KW-0963">Cytoplasm</keyword>
<keyword id="KW-0413">Isomerase</keyword>
<keyword id="KW-0697">Rotamase</keyword>
<reference key="1">
    <citation type="journal article" date="2009" name="J. Bacteriol.">
        <title>Complete genome sequence of the extremophilic Bacillus cereus strain Q1 with industrial applications.</title>
        <authorList>
            <person name="Xiong Z."/>
            <person name="Jiang Y."/>
            <person name="Qi D."/>
            <person name="Lu H."/>
            <person name="Yang F."/>
            <person name="Yang J."/>
            <person name="Chen L."/>
            <person name="Sun L."/>
            <person name="Xu X."/>
            <person name="Xue Y."/>
            <person name="Zhu Y."/>
            <person name="Jin Q."/>
        </authorList>
    </citation>
    <scope>NUCLEOTIDE SEQUENCE [LARGE SCALE GENOMIC DNA]</scope>
    <source>
        <strain>Q1</strain>
    </source>
</reference>
<comment type="function">
    <text evidence="1">Involved in protein export. Acts as a chaperone by maintaining the newly synthesized protein in an open conformation. Functions as a peptidyl-prolyl cis-trans isomerase.</text>
</comment>
<comment type="catalytic activity">
    <reaction evidence="1">
        <text>[protein]-peptidylproline (omega=180) = [protein]-peptidylproline (omega=0)</text>
        <dbReference type="Rhea" id="RHEA:16237"/>
        <dbReference type="Rhea" id="RHEA-COMP:10747"/>
        <dbReference type="Rhea" id="RHEA-COMP:10748"/>
        <dbReference type="ChEBI" id="CHEBI:83833"/>
        <dbReference type="ChEBI" id="CHEBI:83834"/>
        <dbReference type="EC" id="5.2.1.8"/>
    </reaction>
</comment>
<comment type="subcellular location">
    <subcellularLocation>
        <location>Cytoplasm</location>
    </subcellularLocation>
    <text evidence="1">About half TF is bound to the ribosome near the polypeptide exit tunnel while the other half is free in the cytoplasm.</text>
</comment>
<comment type="domain">
    <text evidence="1">Consists of 3 domains; the N-terminus binds the ribosome, the middle domain has PPIase activity, while the C-terminus has intrinsic chaperone activity on its own.</text>
</comment>
<comment type="similarity">
    <text evidence="1">Belongs to the FKBP-type PPIase family. Tig subfamily.</text>
</comment>
<feature type="chain" id="PRO_1000198142" description="Trigger factor">
    <location>
        <begin position="1"/>
        <end position="425"/>
    </location>
</feature>
<feature type="domain" description="PPIase FKBP-type" evidence="1">
    <location>
        <begin position="163"/>
        <end position="248"/>
    </location>
</feature>
<proteinExistence type="inferred from homology"/>
<dbReference type="EC" id="5.2.1.8" evidence="1"/>
<dbReference type="EMBL" id="CP000227">
    <property type="protein sequence ID" value="ACM14687.1"/>
    <property type="molecule type" value="Genomic_DNA"/>
</dbReference>
<dbReference type="SMR" id="B9IZ48"/>
<dbReference type="KEGG" id="bcq:BCQ_4260"/>
<dbReference type="HOGENOM" id="CLU_033058_3_2_9"/>
<dbReference type="Proteomes" id="UP000000441">
    <property type="component" value="Chromosome"/>
</dbReference>
<dbReference type="GO" id="GO:0005737">
    <property type="term" value="C:cytoplasm"/>
    <property type="evidence" value="ECO:0007669"/>
    <property type="project" value="UniProtKB-SubCell"/>
</dbReference>
<dbReference type="GO" id="GO:0003755">
    <property type="term" value="F:peptidyl-prolyl cis-trans isomerase activity"/>
    <property type="evidence" value="ECO:0007669"/>
    <property type="project" value="UniProtKB-UniRule"/>
</dbReference>
<dbReference type="GO" id="GO:0044183">
    <property type="term" value="F:protein folding chaperone"/>
    <property type="evidence" value="ECO:0007669"/>
    <property type="project" value="TreeGrafter"/>
</dbReference>
<dbReference type="GO" id="GO:0043022">
    <property type="term" value="F:ribosome binding"/>
    <property type="evidence" value="ECO:0007669"/>
    <property type="project" value="TreeGrafter"/>
</dbReference>
<dbReference type="GO" id="GO:0051083">
    <property type="term" value="P:'de novo' cotranslational protein folding"/>
    <property type="evidence" value="ECO:0007669"/>
    <property type="project" value="TreeGrafter"/>
</dbReference>
<dbReference type="GO" id="GO:0051301">
    <property type="term" value="P:cell division"/>
    <property type="evidence" value="ECO:0007669"/>
    <property type="project" value="UniProtKB-KW"/>
</dbReference>
<dbReference type="GO" id="GO:0061077">
    <property type="term" value="P:chaperone-mediated protein folding"/>
    <property type="evidence" value="ECO:0007669"/>
    <property type="project" value="TreeGrafter"/>
</dbReference>
<dbReference type="GO" id="GO:0015031">
    <property type="term" value="P:protein transport"/>
    <property type="evidence" value="ECO:0007669"/>
    <property type="project" value="UniProtKB-UniRule"/>
</dbReference>
<dbReference type="GO" id="GO:0043335">
    <property type="term" value="P:protein unfolding"/>
    <property type="evidence" value="ECO:0007669"/>
    <property type="project" value="TreeGrafter"/>
</dbReference>
<dbReference type="FunFam" id="3.10.50.40:FF:000001">
    <property type="entry name" value="Trigger factor"/>
    <property type="match status" value="1"/>
</dbReference>
<dbReference type="FunFam" id="3.30.70.1050:FF:000002">
    <property type="entry name" value="Trigger factor"/>
    <property type="match status" value="1"/>
</dbReference>
<dbReference type="Gene3D" id="3.10.50.40">
    <property type="match status" value="1"/>
</dbReference>
<dbReference type="Gene3D" id="3.30.70.1050">
    <property type="entry name" value="Trigger factor ribosome-binding domain"/>
    <property type="match status" value="1"/>
</dbReference>
<dbReference type="Gene3D" id="1.10.3120.10">
    <property type="entry name" value="Trigger factor, C-terminal domain"/>
    <property type="match status" value="1"/>
</dbReference>
<dbReference type="HAMAP" id="MF_00303">
    <property type="entry name" value="Trigger_factor_Tig"/>
    <property type="match status" value="1"/>
</dbReference>
<dbReference type="InterPro" id="IPR046357">
    <property type="entry name" value="PPIase_dom_sf"/>
</dbReference>
<dbReference type="InterPro" id="IPR001179">
    <property type="entry name" value="PPIase_FKBP_dom"/>
</dbReference>
<dbReference type="InterPro" id="IPR005215">
    <property type="entry name" value="Trig_fac"/>
</dbReference>
<dbReference type="InterPro" id="IPR008880">
    <property type="entry name" value="Trigger_fac_C"/>
</dbReference>
<dbReference type="InterPro" id="IPR037041">
    <property type="entry name" value="Trigger_fac_C_sf"/>
</dbReference>
<dbReference type="InterPro" id="IPR008881">
    <property type="entry name" value="Trigger_fac_ribosome-bd_bac"/>
</dbReference>
<dbReference type="InterPro" id="IPR036611">
    <property type="entry name" value="Trigger_fac_ribosome-bd_sf"/>
</dbReference>
<dbReference type="InterPro" id="IPR027304">
    <property type="entry name" value="Trigger_fact/SurA_dom_sf"/>
</dbReference>
<dbReference type="NCBIfam" id="TIGR00115">
    <property type="entry name" value="tig"/>
    <property type="match status" value="1"/>
</dbReference>
<dbReference type="PANTHER" id="PTHR30560">
    <property type="entry name" value="TRIGGER FACTOR CHAPERONE AND PEPTIDYL-PROLYL CIS/TRANS ISOMERASE"/>
    <property type="match status" value="1"/>
</dbReference>
<dbReference type="PANTHER" id="PTHR30560:SF3">
    <property type="entry name" value="TRIGGER FACTOR-LIKE PROTEIN TIG, CHLOROPLASTIC"/>
    <property type="match status" value="1"/>
</dbReference>
<dbReference type="Pfam" id="PF00254">
    <property type="entry name" value="FKBP_C"/>
    <property type="match status" value="1"/>
</dbReference>
<dbReference type="Pfam" id="PF05698">
    <property type="entry name" value="Trigger_C"/>
    <property type="match status" value="1"/>
</dbReference>
<dbReference type="Pfam" id="PF05697">
    <property type="entry name" value="Trigger_N"/>
    <property type="match status" value="1"/>
</dbReference>
<dbReference type="PIRSF" id="PIRSF003095">
    <property type="entry name" value="Trigger_factor"/>
    <property type="match status" value="1"/>
</dbReference>
<dbReference type="SUPFAM" id="SSF54534">
    <property type="entry name" value="FKBP-like"/>
    <property type="match status" value="1"/>
</dbReference>
<dbReference type="SUPFAM" id="SSF109998">
    <property type="entry name" value="Triger factor/SurA peptide-binding domain-like"/>
    <property type="match status" value="1"/>
</dbReference>
<dbReference type="SUPFAM" id="SSF102735">
    <property type="entry name" value="Trigger factor ribosome-binding domain"/>
    <property type="match status" value="1"/>
</dbReference>
<dbReference type="PROSITE" id="PS50059">
    <property type="entry name" value="FKBP_PPIASE"/>
    <property type="match status" value="1"/>
</dbReference>
<sequence>MAAKWEKLEGNVGVLTIEVDAKEVNNSIDAAFKKVVKTINVPGFRKGKMPRPLFEQRFGVESLYQDALDIILPKAYGEAIDEAGIFPVAHPEIDIEKFEKNANLIFTAKVTVKPEVKLGEYKGLAVEKVETTVTDEDVENELKSLQERQAELVVKEEGTVENGDTAVIDFEGFVDGEAFEGGKGENYSLAIGSGTFIPGFEEQLIGLKSGESKDVEVSFPEEYHAAELAGKPATFKVTVHEIKTKELPELNDEFAKEADEAVATLDELKAKLRTNLEEGKKHEAEHKVRDEVVELAAANAEIDIPEAMIDTELDRMVREFEQRLSQQGMNLELYYQFTGTDADKLKEQMKEDAQKRVRINLVLEAIIEAENIEVTEEEVTAEVEKMAEMYGMPVDAIKQALGSVDALAEDLKVRKAVDFLVENAA</sequence>
<gene>
    <name evidence="1" type="primary">tig</name>
    <name type="ordered locus">BCQ_4260</name>
</gene>
<organism>
    <name type="scientific">Bacillus cereus (strain Q1)</name>
    <dbReference type="NCBI Taxonomy" id="361100"/>
    <lineage>
        <taxon>Bacteria</taxon>
        <taxon>Bacillati</taxon>
        <taxon>Bacillota</taxon>
        <taxon>Bacilli</taxon>
        <taxon>Bacillales</taxon>
        <taxon>Bacillaceae</taxon>
        <taxon>Bacillus</taxon>
        <taxon>Bacillus cereus group</taxon>
    </lineage>
</organism>